<protein>
    <recommendedName>
        <fullName evidence="1">tRNA dimethylallyltransferase</fullName>
        <ecNumber evidence="1">2.5.1.75</ecNumber>
    </recommendedName>
    <alternativeName>
        <fullName evidence="1">Dimethylallyl diphosphate:tRNA dimethylallyltransferase</fullName>
        <shortName evidence="1">DMAPP:tRNA dimethylallyltransferase</shortName>
        <shortName evidence="1">DMATase</shortName>
    </alternativeName>
    <alternativeName>
        <fullName evidence="1">Isopentenyl-diphosphate:tRNA isopentenyltransferase</fullName>
        <shortName evidence="1">IPP transferase</shortName>
        <shortName evidence="1">IPPT</shortName>
        <shortName evidence="1">IPTase</shortName>
    </alternativeName>
</protein>
<reference key="1">
    <citation type="journal article" date="2006" name="Proc. Natl. Acad. Sci. U.S.A.">
        <title>The complete genome sequence of Lactobacillus bulgaricus reveals extensive and ongoing reductive evolution.</title>
        <authorList>
            <person name="van de Guchte M."/>
            <person name="Penaud S."/>
            <person name="Grimaldi C."/>
            <person name="Barbe V."/>
            <person name="Bryson K."/>
            <person name="Nicolas P."/>
            <person name="Robert C."/>
            <person name="Oztas S."/>
            <person name="Mangenot S."/>
            <person name="Couloux A."/>
            <person name="Loux V."/>
            <person name="Dervyn R."/>
            <person name="Bossy R."/>
            <person name="Bolotin A."/>
            <person name="Batto J.-M."/>
            <person name="Walunas T."/>
            <person name="Gibrat J.-F."/>
            <person name="Bessieres P."/>
            <person name="Weissenbach J."/>
            <person name="Ehrlich S.D."/>
            <person name="Maguin E."/>
        </authorList>
    </citation>
    <scope>NUCLEOTIDE SEQUENCE [LARGE SCALE GENOMIC DNA]</scope>
    <source>
        <strain>ATCC 11842 / DSM 20081 / BCRC 10696 / JCM 1002 / NBRC 13953 / NCIMB 11778 / NCTC 12712 / WDCM 00102 / Lb 14</strain>
    </source>
</reference>
<organism>
    <name type="scientific">Lactobacillus delbrueckii subsp. bulgaricus (strain ATCC 11842 / DSM 20081 / BCRC 10696 / JCM 1002 / NBRC 13953 / NCIMB 11778 / NCTC 12712 / WDCM 00102 / Lb 14)</name>
    <dbReference type="NCBI Taxonomy" id="390333"/>
    <lineage>
        <taxon>Bacteria</taxon>
        <taxon>Bacillati</taxon>
        <taxon>Bacillota</taxon>
        <taxon>Bacilli</taxon>
        <taxon>Lactobacillales</taxon>
        <taxon>Lactobacillaceae</taxon>
        <taxon>Lactobacillus</taxon>
    </lineage>
</organism>
<feature type="chain" id="PRO_1000020612" description="tRNA dimethylallyltransferase">
    <location>
        <begin position="1"/>
        <end position="308"/>
    </location>
</feature>
<feature type="region of interest" description="Interaction with substrate tRNA" evidence="1">
    <location>
        <begin position="34"/>
        <end position="37"/>
    </location>
</feature>
<feature type="binding site" evidence="1">
    <location>
        <begin position="9"/>
        <end position="16"/>
    </location>
    <ligand>
        <name>ATP</name>
        <dbReference type="ChEBI" id="CHEBI:30616"/>
    </ligand>
</feature>
<feature type="binding site" evidence="1">
    <location>
        <begin position="11"/>
        <end position="16"/>
    </location>
    <ligand>
        <name>substrate</name>
    </ligand>
</feature>
<feature type="site" description="Interaction with substrate tRNA" evidence="1">
    <location>
        <position position="100"/>
    </location>
</feature>
<comment type="function">
    <text evidence="1">Catalyzes the transfer of a dimethylallyl group onto the adenine at position 37 in tRNAs that read codons beginning with uridine, leading to the formation of N6-(dimethylallyl)adenosine (i(6)A).</text>
</comment>
<comment type="catalytic activity">
    <reaction evidence="1">
        <text>adenosine(37) in tRNA + dimethylallyl diphosphate = N(6)-dimethylallyladenosine(37) in tRNA + diphosphate</text>
        <dbReference type="Rhea" id="RHEA:26482"/>
        <dbReference type="Rhea" id="RHEA-COMP:10162"/>
        <dbReference type="Rhea" id="RHEA-COMP:10375"/>
        <dbReference type="ChEBI" id="CHEBI:33019"/>
        <dbReference type="ChEBI" id="CHEBI:57623"/>
        <dbReference type="ChEBI" id="CHEBI:74411"/>
        <dbReference type="ChEBI" id="CHEBI:74415"/>
        <dbReference type="EC" id="2.5.1.75"/>
    </reaction>
</comment>
<comment type="cofactor">
    <cofactor evidence="1">
        <name>Mg(2+)</name>
        <dbReference type="ChEBI" id="CHEBI:18420"/>
    </cofactor>
</comment>
<comment type="subunit">
    <text evidence="1">Monomer.</text>
</comment>
<comment type="similarity">
    <text evidence="1">Belongs to the IPP transferase family.</text>
</comment>
<gene>
    <name evidence="1" type="primary">miaA</name>
    <name type="ordered locus">Ldb1476</name>
</gene>
<name>MIAA_LACDA</name>
<sequence>MQKVVAIVGPTAVGKTSLAIEIAKKLDGEIVSGDSMQIYKEVAIGTAKASREEQAEVKHYLVDAHSVFEDFSVKNFVDEARSAIGEIAGKGKLPIIAGGTGFYVNALLNDMQLGDKEEEAASVDPEWEVFLAANGPQALWEELNKKDPEAAKKIPVANSRRSLRALSVISRTGGLFSKQQAEIKTRYDYLIIGLNSDREAIYQRINQRVDLMMEAGLLEEARFVYEHRAGEHQVLQAIGYKEFFPYFAGEASLETCVMALKTASRRYAKRQLTYFRNKLPVEWYDPLTDPNCANRIAVRIEEWMKEEK</sequence>
<keyword id="KW-0067">ATP-binding</keyword>
<keyword id="KW-0460">Magnesium</keyword>
<keyword id="KW-0547">Nucleotide-binding</keyword>
<keyword id="KW-1185">Reference proteome</keyword>
<keyword id="KW-0808">Transferase</keyword>
<keyword id="KW-0819">tRNA processing</keyword>
<proteinExistence type="inferred from homology"/>
<evidence type="ECO:0000255" key="1">
    <source>
        <dbReference type="HAMAP-Rule" id="MF_00185"/>
    </source>
</evidence>
<dbReference type="EC" id="2.5.1.75" evidence="1"/>
<dbReference type="EMBL" id="CR954253">
    <property type="protein sequence ID" value="CAI98276.1"/>
    <property type="molecule type" value="Genomic_DNA"/>
</dbReference>
<dbReference type="RefSeq" id="WP_011544067.1">
    <property type="nucleotide sequence ID" value="NC_008054.1"/>
</dbReference>
<dbReference type="SMR" id="Q1G9D6"/>
<dbReference type="STRING" id="390333.Ldb1476"/>
<dbReference type="KEGG" id="ldb:Ldb1476"/>
<dbReference type="PATRIC" id="fig|390333.7.peg.1327"/>
<dbReference type="eggNOG" id="COG0324">
    <property type="taxonomic scope" value="Bacteria"/>
</dbReference>
<dbReference type="HOGENOM" id="CLU_032616_0_1_9"/>
<dbReference type="BioCyc" id="LDEL390333:LDB_RS06350-MONOMER"/>
<dbReference type="Proteomes" id="UP000001259">
    <property type="component" value="Chromosome"/>
</dbReference>
<dbReference type="GO" id="GO:0005524">
    <property type="term" value="F:ATP binding"/>
    <property type="evidence" value="ECO:0007669"/>
    <property type="project" value="UniProtKB-UniRule"/>
</dbReference>
<dbReference type="GO" id="GO:0052381">
    <property type="term" value="F:tRNA dimethylallyltransferase activity"/>
    <property type="evidence" value="ECO:0007669"/>
    <property type="project" value="UniProtKB-UniRule"/>
</dbReference>
<dbReference type="GO" id="GO:0006400">
    <property type="term" value="P:tRNA modification"/>
    <property type="evidence" value="ECO:0007669"/>
    <property type="project" value="TreeGrafter"/>
</dbReference>
<dbReference type="Gene3D" id="1.10.20.140">
    <property type="match status" value="1"/>
</dbReference>
<dbReference type="Gene3D" id="3.40.50.300">
    <property type="entry name" value="P-loop containing nucleotide triphosphate hydrolases"/>
    <property type="match status" value="1"/>
</dbReference>
<dbReference type="HAMAP" id="MF_00185">
    <property type="entry name" value="IPP_trans"/>
    <property type="match status" value="1"/>
</dbReference>
<dbReference type="InterPro" id="IPR039657">
    <property type="entry name" value="Dimethylallyltransferase"/>
</dbReference>
<dbReference type="InterPro" id="IPR018022">
    <property type="entry name" value="IPT"/>
</dbReference>
<dbReference type="InterPro" id="IPR027417">
    <property type="entry name" value="P-loop_NTPase"/>
</dbReference>
<dbReference type="NCBIfam" id="TIGR00174">
    <property type="entry name" value="miaA"/>
    <property type="match status" value="1"/>
</dbReference>
<dbReference type="PANTHER" id="PTHR11088">
    <property type="entry name" value="TRNA DIMETHYLALLYLTRANSFERASE"/>
    <property type="match status" value="1"/>
</dbReference>
<dbReference type="PANTHER" id="PTHR11088:SF60">
    <property type="entry name" value="TRNA DIMETHYLALLYLTRANSFERASE"/>
    <property type="match status" value="1"/>
</dbReference>
<dbReference type="Pfam" id="PF01715">
    <property type="entry name" value="IPPT"/>
    <property type="match status" value="1"/>
</dbReference>
<dbReference type="SUPFAM" id="SSF52540">
    <property type="entry name" value="P-loop containing nucleoside triphosphate hydrolases"/>
    <property type="match status" value="2"/>
</dbReference>
<accession>Q1G9D6</accession>